<keyword id="KW-0240">DNA-directed RNA polymerase</keyword>
<keyword id="KW-0460">Magnesium</keyword>
<keyword id="KW-0479">Metal-binding</keyword>
<keyword id="KW-0548">Nucleotidyltransferase</keyword>
<keyword id="KW-1185">Reference proteome</keyword>
<keyword id="KW-0804">Transcription</keyword>
<keyword id="KW-0808">Transferase</keyword>
<keyword id="KW-0862">Zinc</keyword>
<organism>
    <name type="scientific">Haemophilus ducreyi (strain 35000HP / ATCC 700724)</name>
    <dbReference type="NCBI Taxonomy" id="233412"/>
    <lineage>
        <taxon>Bacteria</taxon>
        <taxon>Pseudomonadati</taxon>
        <taxon>Pseudomonadota</taxon>
        <taxon>Gammaproteobacteria</taxon>
        <taxon>Pasteurellales</taxon>
        <taxon>Pasteurellaceae</taxon>
        <taxon>Haemophilus</taxon>
    </lineage>
</organism>
<evidence type="ECO:0000255" key="1">
    <source>
        <dbReference type="HAMAP-Rule" id="MF_01322"/>
    </source>
</evidence>
<sequence>MKDLVKFLKAQSKSNDDFDVIKIGLASPDKIRSWSFGEVKKPETINYRTFKPERDGLFCARIFGPVKDYECLCGKYKRLKHRGVICEKCGVEVTQTKVRRDRMGHIELACPVAHIWFLKSLPSRIGLILDMPLRDIERVLYFESYVVTEPGMTDLEKNQLLTEEQYLEAEERWGDEFDAKMGAEGIQVLLRDMDLEHQCEVMREELQETNSETKRKKITKRLKLLEAFQQSGNKPEWMVMTVLPVLPPDLRPLVPLDGGRFATSDLNDLYRRVINRNNRLKRLLGLVAPDIIVRNEKRMLQESVDALLDNGRRGRAITGSNKRPLKSLADMIKGKQGRFRQNLLGKRVDYSGRSVITVGPYLHLHQCGLPKKMALELFRPFIYSKLESRGIASTIKAAKKMVEREEPIVWDILAEVIREHPILLNRAPTLHRLGIQAFEPLLIEGKAIQLHPLVCAAFNADFDGDQMAVHVPLTLEAQLEARALMMSTNNVLSPASGDPIIVPSQDVVLGLYYMTRDKVNGKGEGMYFLDPREAEKAYRTGQVELHARVKVRITEYSKNEAGEFLAETNLVDTTIGRAILWMIAPKGMPFSVFNQTLGKKAISKLINESYRRLGLKESVVLADQIMYTGFAYAARSGVSVGIDDMVIPAQKNDIITAAEAEVAEIQEQFNSGLVTAGERYNKVIDIWAAANERVAKAMMENLSTEEMLNREGNPEKQASFNSIFMMADSGARGSAVQIRQLAGMRGLMARPDGSIIETPITANFREGLNVLQYFISTHGARKGLADTALKTANSGYLTRRLVDVAQDLVITEDDCGTHEGIVMTPLIEGGDVKEALRDRVLGRVVAEDVLKPGTEQILIPRNTLIDEKWCDVIDVESVDVIKVRSVVTCNTDFGVCAKCYGRDLARGHLINQGEAVGVIAAQSIGEPGTQLTMRTFHIGGAASAAAKESSIQVKNAGTIKLANAKFVTNKEGKIVLTSRNTELTVIDIFGRTKENYKVPYGAVLSKNDGAEVGVGEIVANWDPHTMPVISEVSGRIQFSDIVDGLTVARQTDDLTGLSSIVVQDVGERATAGKDLRPALRLVDAKGNDIFIPGTDVAAQYFLPGKAIVTLDDGAEIAVGEALARIPQESVGTKDITGGLPRVADLFEARKPKEAAILAEISGIVSFGKETKGKRRLVITPAEGEAFEEMIPKWRQLNVFEGEMVQRGDIISDGAETPHDILRLRGVHAVTDYIVNEVQEVYRLQGVKINDKHIEVIVRQMLRKAVITNAYDSEFLEGEQVEVARVKIANRKRAEEGKPLVEFERELLGITKASLATESFISAASFQETTRVLTEAAVAGKRDELRGLKENVIVGRLIPAGTGFAYHQARAKKRVVAEQPFEMPVSKNAFATEADIEAEFEFVADEATQNLAALLNATDEE</sequence>
<protein>
    <recommendedName>
        <fullName evidence="1">DNA-directed RNA polymerase subunit beta'</fullName>
        <shortName evidence="1">RNAP subunit beta'</shortName>
        <ecNumber evidence="1">2.7.7.6</ecNumber>
    </recommendedName>
    <alternativeName>
        <fullName evidence="1">RNA polymerase subunit beta'</fullName>
    </alternativeName>
    <alternativeName>
        <fullName evidence="1">Transcriptase subunit beta'</fullName>
    </alternativeName>
</protein>
<comment type="function">
    <text evidence="1">DNA-dependent RNA polymerase catalyzes the transcription of DNA into RNA using the four ribonucleoside triphosphates as substrates.</text>
</comment>
<comment type="catalytic activity">
    <reaction evidence="1">
        <text>RNA(n) + a ribonucleoside 5'-triphosphate = RNA(n+1) + diphosphate</text>
        <dbReference type="Rhea" id="RHEA:21248"/>
        <dbReference type="Rhea" id="RHEA-COMP:14527"/>
        <dbReference type="Rhea" id="RHEA-COMP:17342"/>
        <dbReference type="ChEBI" id="CHEBI:33019"/>
        <dbReference type="ChEBI" id="CHEBI:61557"/>
        <dbReference type="ChEBI" id="CHEBI:140395"/>
        <dbReference type="EC" id="2.7.7.6"/>
    </reaction>
</comment>
<comment type="cofactor">
    <cofactor evidence="1">
        <name>Mg(2+)</name>
        <dbReference type="ChEBI" id="CHEBI:18420"/>
    </cofactor>
    <text evidence="1">Binds 1 Mg(2+) ion per subunit.</text>
</comment>
<comment type="cofactor">
    <cofactor evidence="1">
        <name>Zn(2+)</name>
        <dbReference type="ChEBI" id="CHEBI:29105"/>
    </cofactor>
    <text evidence="1">Binds 2 Zn(2+) ions per subunit.</text>
</comment>
<comment type="subunit">
    <text evidence="1">The RNAP catalytic core consists of 2 alpha, 1 beta, 1 beta' and 1 omega subunit. When a sigma factor is associated with the core the holoenzyme is formed, which can initiate transcription.</text>
</comment>
<comment type="similarity">
    <text evidence="1">Belongs to the RNA polymerase beta' chain family.</text>
</comment>
<feature type="chain" id="PRO_0000067746" description="DNA-directed RNA polymerase subunit beta'">
    <location>
        <begin position="1"/>
        <end position="1420"/>
    </location>
</feature>
<feature type="binding site" evidence="1">
    <location>
        <position position="71"/>
    </location>
    <ligand>
        <name>Zn(2+)</name>
        <dbReference type="ChEBI" id="CHEBI:29105"/>
        <label>1</label>
    </ligand>
</feature>
<feature type="binding site" evidence="1">
    <location>
        <position position="73"/>
    </location>
    <ligand>
        <name>Zn(2+)</name>
        <dbReference type="ChEBI" id="CHEBI:29105"/>
        <label>1</label>
    </ligand>
</feature>
<feature type="binding site" evidence="1">
    <location>
        <position position="86"/>
    </location>
    <ligand>
        <name>Zn(2+)</name>
        <dbReference type="ChEBI" id="CHEBI:29105"/>
        <label>1</label>
    </ligand>
</feature>
<feature type="binding site" evidence="1">
    <location>
        <position position="89"/>
    </location>
    <ligand>
        <name>Zn(2+)</name>
        <dbReference type="ChEBI" id="CHEBI:29105"/>
        <label>1</label>
    </ligand>
</feature>
<feature type="binding site" evidence="1">
    <location>
        <position position="461"/>
    </location>
    <ligand>
        <name>Mg(2+)</name>
        <dbReference type="ChEBI" id="CHEBI:18420"/>
    </ligand>
</feature>
<feature type="binding site" evidence="1">
    <location>
        <position position="463"/>
    </location>
    <ligand>
        <name>Mg(2+)</name>
        <dbReference type="ChEBI" id="CHEBI:18420"/>
    </ligand>
</feature>
<feature type="binding site" evidence="1">
    <location>
        <position position="465"/>
    </location>
    <ligand>
        <name>Mg(2+)</name>
        <dbReference type="ChEBI" id="CHEBI:18420"/>
    </ligand>
</feature>
<feature type="binding site" evidence="1">
    <location>
        <position position="815"/>
    </location>
    <ligand>
        <name>Zn(2+)</name>
        <dbReference type="ChEBI" id="CHEBI:29105"/>
        <label>2</label>
    </ligand>
</feature>
<feature type="binding site" evidence="1">
    <location>
        <position position="889"/>
    </location>
    <ligand>
        <name>Zn(2+)</name>
        <dbReference type="ChEBI" id="CHEBI:29105"/>
        <label>2</label>
    </ligand>
</feature>
<feature type="binding site" evidence="1">
    <location>
        <position position="896"/>
    </location>
    <ligand>
        <name>Zn(2+)</name>
        <dbReference type="ChEBI" id="CHEBI:29105"/>
        <label>2</label>
    </ligand>
</feature>
<feature type="binding site" evidence="1">
    <location>
        <position position="899"/>
    </location>
    <ligand>
        <name>Zn(2+)</name>
        <dbReference type="ChEBI" id="CHEBI:29105"/>
        <label>2</label>
    </ligand>
</feature>
<accession>Q7VKL8</accession>
<proteinExistence type="inferred from homology"/>
<dbReference type="EC" id="2.7.7.6" evidence="1"/>
<dbReference type="EMBL" id="AE017143">
    <property type="protein sequence ID" value="AAP96607.1"/>
    <property type="molecule type" value="Genomic_DNA"/>
</dbReference>
<dbReference type="RefSeq" id="WP_010945636.1">
    <property type="nucleotide sequence ID" value="NC_002940.2"/>
</dbReference>
<dbReference type="SMR" id="Q7VKL8"/>
<dbReference type="STRING" id="233412.HD_1876"/>
<dbReference type="KEGG" id="hdu:HD_1876"/>
<dbReference type="eggNOG" id="COG0086">
    <property type="taxonomic scope" value="Bacteria"/>
</dbReference>
<dbReference type="HOGENOM" id="CLU_000524_3_1_6"/>
<dbReference type="OrthoDB" id="9815296at2"/>
<dbReference type="Proteomes" id="UP000001022">
    <property type="component" value="Chromosome"/>
</dbReference>
<dbReference type="GO" id="GO:0000428">
    <property type="term" value="C:DNA-directed RNA polymerase complex"/>
    <property type="evidence" value="ECO:0007669"/>
    <property type="project" value="UniProtKB-KW"/>
</dbReference>
<dbReference type="GO" id="GO:0003677">
    <property type="term" value="F:DNA binding"/>
    <property type="evidence" value="ECO:0007669"/>
    <property type="project" value="UniProtKB-UniRule"/>
</dbReference>
<dbReference type="GO" id="GO:0003899">
    <property type="term" value="F:DNA-directed RNA polymerase activity"/>
    <property type="evidence" value="ECO:0007669"/>
    <property type="project" value="UniProtKB-UniRule"/>
</dbReference>
<dbReference type="GO" id="GO:0000287">
    <property type="term" value="F:magnesium ion binding"/>
    <property type="evidence" value="ECO:0007669"/>
    <property type="project" value="UniProtKB-UniRule"/>
</dbReference>
<dbReference type="GO" id="GO:0008270">
    <property type="term" value="F:zinc ion binding"/>
    <property type="evidence" value="ECO:0007669"/>
    <property type="project" value="UniProtKB-UniRule"/>
</dbReference>
<dbReference type="GO" id="GO:0006351">
    <property type="term" value="P:DNA-templated transcription"/>
    <property type="evidence" value="ECO:0007669"/>
    <property type="project" value="UniProtKB-UniRule"/>
</dbReference>
<dbReference type="CDD" id="cd02655">
    <property type="entry name" value="RNAP_beta'_C"/>
    <property type="match status" value="1"/>
</dbReference>
<dbReference type="CDD" id="cd01609">
    <property type="entry name" value="RNAP_beta'_N"/>
    <property type="match status" value="1"/>
</dbReference>
<dbReference type="FunFam" id="1.10.132.30:FF:000003">
    <property type="entry name" value="DNA-directed RNA polymerase subunit beta"/>
    <property type="match status" value="1"/>
</dbReference>
<dbReference type="FunFam" id="1.10.150.390:FF:000002">
    <property type="entry name" value="DNA-directed RNA polymerase subunit beta"/>
    <property type="match status" value="1"/>
</dbReference>
<dbReference type="FunFam" id="4.10.860.120:FF:000001">
    <property type="entry name" value="DNA-directed RNA polymerase subunit beta"/>
    <property type="match status" value="1"/>
</dbReference>
<dbReference type="Gene3D" id="1.10.132.30">
    <property type="match status" value="1"/>
</dbReference>
<dbReference type="Gene3D" id="1.10.150.390">
    <property type="match status" value="1"/>
</dbReference>
<dbReference type="Gene3D" id="1.10.1790.20">
    <property type="match status" value="1"/>
</dbReference>
<dbReference type="Gene3D" id="1.10.40.90">
    <property type="match status" value="1"/>
</dbReference>
<dbReference type="Gene3D" id="2.40.40.20">
    <property type="match status" value="1"/>
</dbReference>
<dbReference type="Gene3D" id="2.40.50.100">
    <property type="match status" value="3"/>
</dbReference>
<dbReference type="Gene3D" id="4.10.860.120">
    <property type="entry name" value="RNA polymerase II, clamp domain"/>
    <property type="match status" value="1"/>
</dbReference>
<dbReference type="Gene3D" id="1.10.274.100">
    <property type="entry name" value="RNA polymerase Rpb1, domain 3"/>
    <property type="match status" value="1"/>
</dbReference>
<dbReference type="HAMAP" id="MF_01322">
    <property type="entry name" value="RNApol_bact_RpoC"/>
    <property type="match status" value="1"/>
</dbReference>
<dbReference type="InterPro" id="IPR045867">
    <property type="entry name" value="DNA-dir_RpoC_beta_prime"/>
</dbReference>
<dbReference type="InterPro" id="IPR012754">
    <property type="entry name" value="DNA-dir_RpoC_beta_prime_bact"/>
</dbReference>
<dbReference type="InterPro" id="IPR000722">
    <property type="entry name" value="RNA_pol_asu"/>
</dbReference>
<dbReference type="InterPro" id="IPR006592">
    <property type="entry name" value="RNA_pol_N"/>
</dbReference>
<dbReference type="InterPro" id="IPR007080">
    <property type="entry name" value="RNA_pol_Rpb1_1"/>
</dbReference>
<dbReference type="InterPro" id="IPR007066">
    <property type="entry name" value="RNA_pol_Rpb1_3"/>
</dbReference>
<dbReference type="InterPro" id="IPR042102">
    <property type="entry name" value="RNA_pol_Rpb1_3_sf"/>
</dbReference>
<dbReference type="InterPro" id="IPR007083">
    <property type="entry name" value="RNA_pol_Rpb1_4"/>
</dbReference>
<dbReference type="InterPro" id="IPR007081">
    <property type="entry name" value="RNA_pol_Rpb1_5"/>
</dbReference>
<dbReference type="InterPro" id="IPR044893">
    <property type="entry name" value="RNA_pol_Rpb1_clamp_domain"/>
</dbReference>
<dbReference type="InterPro" id="IPR038120">
    <property type="entry name" value="Rpb1_funnel_sf"/>
</dbReference>
<dbReference type="NCBIfam" id="TIGR02386">
    <property type="entry name" value="rpoC_TIGR"/>
    <property type="match status" value="1"/>
</dbReference>
<dbReference type="PANTHER" id="PTHR19376">
    <property type="entry name" value="DNA-DIRECTED RNA POLYMERASE"/>
    <property type="match status" value="1"/>
</dbReference>
<dbReference type="PANTHER" id="PTHR19376:SF54">
    <property type="entry name" value="DNA-DIRECTED RNA POLYMERASE SUBUNIT BETA"/>
    <property type="match status" value="1"/>
</dbReference>
<dbReference type="Pfam" id="PF04997">
    <property type="entry name" value="RNA_pol_Rpb1_1"/>
    <property type="match status" value="1"/>
</dbReference>
<dbReference type="Pfam" id="PF00623">
    <property type="entry name" value="RNA_pol_Rpb1_2"/>
    <property type="match status" value="2"/>
</dbReference>
<dbReference type="Pfam" id="PF04983">
    <property type="entry name" value="RNA_pol_Rpb1_3"/>
    <property type="match status" value="1"/>
</dbReference>
<dbReference type="Pfam" id="PF05000">
    <property type="entry name" value="RNA_pol_Rpb1_4"/>
    <property type="match status" value="1"/>
</dbReference>
<dbReference type="Pfam" id="PF04998">
    <property type="entry name" value="RNA_pol_Rpb1_5"/>
    <property type="match status" value="1"/>
</dbReference>
<dbReference type="SMART" id="SM00663">
    <property type="entry name" value="RPOLA_N"/>
    <property type="match status" value="1"/>
</dbReference>
<dbReference type="SUPFAM" id="SSF64484">
    <property type="entry name" value="beta and beta-prime subunits of DNA dependent RNA-polymerase"/>
    <property type="match status" value="1"/>
</dbReference>
<reference key="1">
    <citation type="submission" date="2003-06" db="EMBL/GenBank/DDBJ databases">
        <title>The complete genome sequence of Haemophilus ducreyi.</title>
        <authorList>
            <person name="Munson R.S. Jr."/>
            <person name="Ray W.C."/>
            <person name="Mahairas G."/>
            <person name="Sabo P."/>
            <person name="Mungur R."/>
            <person name="Johnson L."/>
            <person name="Nguyen D."/>
            <person name="Wang J."/>
            <person name="Forst C."/>
            <person name="Hood L."/>
        </authorList>
    </citation>
    <scope>NUCLEOTIDE SEQUENCE [LARGE SCALE GENOMIC DNA]</scope>
    <source>
        <strain>35000HP / ATCC 700724</strain>
    </source>
</reference>
<gene>
    <name evidence="1" type="primary">rpoC</name>
    <name type="ordered locus">HD_1876</name>
</gene>
<name>RPOC_HAEDU</name>